<accession>Q57JJ4</accession>
<reference key="1">
    <citation type="journal article" date="2005" name="Nucleic Acids Res.">
        <title>The genome sequence of Salmonella enterica serovar Choleraesuis, a highly invasive and resistant zoonotic pathogen.</title>
        <authorList>
            <person name="Chiu C.-H."/>
            <person name="Tang P."/>
            <person name="Chu C."/>
            <person name="Hu S."/>
            <person name="Bao Q."/>
            <person name="Yu J."/>
            <person name="Chou Y.-Y."/>
            <person name="Wang H.-S."/>
            <person name="Lee Y.-S."/>
        </authorList>
    </citation>
    <scope>NUCLEOTIDE SEQUENCE [LARGE SCALE GENOMIC DNA]</scope>
    <source>
        <strain>SC-B67</strain>
    </source>
</reference>
<dbReference type="EMBL" id="AE017220">
    <property type="protein sequence ID" value="AAX67118.1"/>
    <property type="status" value="ALT_INIT"/>
    <property type="molecule type" value="Genomic_DNA"/>
</dbReference>
<dbReference type="SMR" id="Q57JJ4"/>
<dbReference type="KEGG" id="sec:SCH_3212"/>
<dbReference type="HOGENOM" id="CLU_135650_0_1_6"/>
<dbReference type="Proteomes" id="UP000000538">
    <property type="component" value="Chromosome"/>
</dbReference>
<dbReference type="CDD" id="cd10456">
    <property type="entry name" value="GIY-YIG_UPF0213"/>
    <property type="match status" value="1"/>
</dbReference>
<dbReference type="Gene3D" id="3.40.1440.10">
    <property type="entry name" value="GIY-YIG endonuclease"/>
    <property type="match status" value="1"/>
</dbReference>
<dbReference type="HAMAP" id="MF_01029">
    <property type="entry name" value="UPF0213"/>
    <property type="match status" value="1"/>
</dbReference>
<dbReference type="InterPro" id="IPR000305">
    <property type="entry name" value="GIY-YIG_endonuc"/>
</dbReference>
<dbReference type="InterPro" id="IPR035901">
    <property type="entry name" value="GIY-YIG_endonuc_sf"/>
</dbReference>
<dbReference type="InterPro" id="IPR050190">
    <property type="entry name" value="UPF0213_domain"/>
</dbReference>
<dbReference type="InterPro" id="IPR022992">
    <property type="entry name" value="UPF0213_GIY-YIG_endonuc"/>
</dbReference>
<dbReference type="PANTHER" id="PTHR34477">
    <property type="entry name" value="UPF0213 PROTEIN YHBQ"/>
    <property type="match status" value="1"/>
</dbReference>
<dbReference type="PANTHER" id="PTHR34477:SF1">
    <property type="entry name" value="UPF0213 PROTEIN YHBQ"/>
    <property type="match status" value="1"/>
</dbReference>
<dbReference type="Pfam" id="PF01541">
    <property type="entry name" value="GIY-YIG"/>
    <property type="match status" value="1"/>
</dbReference>
<dbReference type="SMART" id="SM00465">
    <property type="entry name" value="GIYc"/>
    <property type="match status" value="1"/>
</dbReference>
<dbReference type="SUPFAM" id="SSF82771">
    <property type="entry name" value="GIY-YIG endonuclease"/>
    <property type="match status" value="1"/>
</dbReference>
<dbReference type="PROSITE" id="PS50164">
    <property type="entry name" value="GIY_YIG"/>
    <property type="match status" value="1"/>
</dbReference>
<organism>
    <name type="scientific">Salmonella choleraesuis (strain SC-B67)</name>
    <dbReference type="NCBI Taxonomy" id="321314"/>
    <lineage>
        <taxon>Bacteria</taxon>
        <taxon>Pseudomonadati</taxon>
        <taxon>Pseudomonadota</taxon>
        <taxon>Gammaproteobacteria</taxon>
        <taxon>Enterobacterales</taxon>
        <taxon>Enterobacteriaceae</taxon>
        <taxon>Salmonella</taxon>
    </lineage>
</organism>
<sequence>MTPWYLYLIRTADNALYTGITTDVARRYRQHQTGKGAKALRGKGELTLAFAAQVGDRSLALRIEYRIKQLTKRQKERLVTEREAFEALLSSLQTPVLKND</sequence>
<comment type="similarity">
    <text evidence="1">Belongs to the UPF0213 family.</text>
</comment>
<comment type="sequence caution" evidence="2">
    <conflict type="erroneous initiation">
        <sequence resource="EMBL-CDS" id="AAX67118"/>
    </conflict>
</comment>
<evidence type="ECO:0000255" key="1">
    <source>
        <dbReference type="HAMAP-Rule" id="MF_01029"/>
    </source>
</evidence>
<evidence type="ECO:0000305" key="2"/>
<name>YHBQ_SALCH</name>
<proteinExistence type="inferred from homology"/>
<gene>
    <name evidence="1" type="primary">yhbQ</name>
    <name type="ordered locus">SCH_3212</name>
</gene>
<protein>
    <recommendedName>
        <fullName evidence="1">UPF0213 protein YhbQ</fullName>
    </recommendedName>
</protein>
<feature type="chain" id="PRO_0000328911" description="UPF0213 protein YhbQ">
    <location>
        <begin position="1"/>
        <end position="100"/>
    </location>
</feature>
<feature type="domain" description="GIY-YIG" evidence="1">
    <location>
        <begin position="2"/>
        <end position="77"/>
    </location>
</feature>